<reference key="1">
    <citation type="journal article" date="2011" name="BMC Genomics">
        <title>Complete genome sequence of the filamentous anoxygenic phototrophic bacterium Chloroflexus aurantiacus.</title>
        <authorList>
            <person name="Tang K.H."/>
            <person name="Barry K."/>
            <person name="Chertkov O."/>
            <person name="Dalin E."/>
            <person name="Han C.S."/>
            <person name="Hauser L.J."/>
            <person name="Honchak B.M."/>
            <person name="Karbach L.E."/>
            <person name="Land M.L."/>
            <person name="Lapidus A."/>
            <person name="Larimer F.W."/>
            <person name="Mikhailova N."/>
            <person name="Pitluck S."/>
            <person name="Pierson B.K."/>
            <person name="Blankenship R.E."/>
        </authorList>
    </citation>
    <scope>NUCLEOTIDE SEQUENCE [LARGE SCALE GENOMIC DNA]</scope>
    <source>
        <strain>ATCC 29366 / DSM 635 / J-10-fl</strain>
    </source>
</reference>
<reference key="2">
    <citation type="journal article" date="1996" name="Arch. Microbiol.">
        <title>Malate dehydrogenase from the green gliding bacterium Chloroflexus aurantiacus is phylogenetically related to lactic dehydrogenases.</title>
        <authorList>
            <person name="Synstad B."/>
            <person name="Emmerhoff O."/>
            <person name="Sirevag R."/>
        </authorList>
    </citation>
    <scope>NUCLEOTIDE SEQUENCE [GENOMIC DNA] OF 64-316</scope>
</reference>
<feature type="chain" id="PRO_0000162731" description="Uncharacterized RNA pseudouridine synthase Caur_0901">
    <location>
        <begin position="1"/>
        <end position="316"/>
    </location>
</feature>
<feature type="domain" description="S4 RNA-binding" evidence="2">
    <location>
        <begin position="26"/>
        <end position="98"/>
    </location>
</feature>
<feature type="active site" evidence="1">
    <location>
        <position position="148"/>
    </location>
</feature>
<gene>
    <name type="ordered locus">Caur_0901</name>
</gene>
<proteinExistence type="inferred from homology"/>
<sequence length="316" mass="35298">MSGEGEIELLEAEERVVVVPPTQTAERIDRFLAGAMPDLSRAQVQRLIEQGFVLYDGRSPRASQPVRPGAVIQLTIPPPIPTELVAEPIPLDVVYEDADIAVINKPAGMVVHPAPGHPRGTLVNALLARYPDLAIGGELRPGIVHRLDRDTSGLLVIARHDQAMRSLVDQQQARRMRKIYQALVIGRPPETGTIDAPIGRDPRDRLRMAVVPDGRPARTHYRLLDTFGDYSLLEVQLETGRTHQIRVHLRHLGYPIVGDPVYGPRRSHLHLSRQFLHAAYLGLVHPRSGRWQEFTAPLPADLQIVLRQLQDRASYH</sequence>
<comment type="catalytic activity">
    <reaction>
        <text>a uridine in RNA = a pseudouridine in RNA</text>
        <dbReference type="Rhea" id="RHEA:48348"/>
        <dbReference type="Rhea" id="RHEA-COMP:12068"/>
        <dbReference type="Rhea" id="RHEA-COMP:12069"/>
        <dbReference type="ChEBI" id="CHEBI:65314"/>
        <dbReference type="ChEBI" id="CHEBI:65315"/>
    </reaction>
</comment>
<comment type="similarity">
    <text evidence="3">Belongs to the pseudouridine synthase RluA family.</text>
</comment>
<accession>Q45826</accession>
<accession>A9WH39</accession>
<protein>
    <recommendedName>
        <fullName>Uncharacterized RNA pseudouridine synthase Caur_0901</fullName>
        <ecNumber>5.4.99.-</ecNumber>
    </recommendedName>
    <alternativeName>
        <fullName>RNA pseudouridylate synthase</fullName>
    </alternativeName>
    <alternativeName>
        <fullName>RNA-uridine isomerase</fullName>
    </alternativeName>
</protein>
<evidence type="ECO:0000250" key="1"/>
<evidence type="ECO:0000255" key="2">
    <source>
        <dbReference type="PROSITE-ProRule" id="PRU00182"/>
    </source>
</evidence>
<evidence type="ECO:0000305" key="3"/>
<organism>
    <name type="scientific">Chloroflexus aurantiacus (strain ATCC 29366 / DSM 635 / J-10-fl)</name>
    <dbReference type="NCBI Taxonomy" id="324602"/>
    <lineage>
        <taxon>Bacteria</taxon>
        <taxon>Bacillati</taxon>
        <taxon>Chloroflexota</taxon>
        <taxon>Chloroflexia</taxon>
        <taxon>Chloroflexales</taxon>
        <taxon>Chloroflexineae</taxon>
        <taxon>Chloroflexaceae</taxon>
        <taxon>Chloroflexus</taxon>
    </lineage>
</organism>
<dbReference type="EC" id="5.4.99.-"/>
<dbReference type="EMBL" id="CP000909">
    <property type="protein sequence ID" value="ABY34134.1"/>
    <property type="molecule type" value="Genomic_DNA"/>
</dbReference>
<dbReference type="EMBL" id="X89038">
    <property type="protein sequence ID" value="CAA61435.1"/>
    <property type="molecule type" value="Genomic_DNA"/>
</dbReference>
<dbReference type="RefSeq" id="WP_012256790.1">
    <property type="nucleotide sequence ID" value="NC_010175.1"/>
</dbReference>
<dbReference type="RefSeq" id="YP_001634523.1">
    <property type="nucleotide sequence ID" value="NC_010175.1"/>
</dbReference>
<dbReference type="SMR" id="Q45826"/>
<dbReference type="FunCoup" id="Q45826">
    <property type="interactions" value="523"/>
</dbReference>
<dbReference type="STRING" id="324602.Caur_0901"/>
<dbReference type="EnsemblBacteria" id="ABY34134">
    <property type="protein sequence ID" value="ABY34134"/>
    <property type="gene ID" value="Caur_0901"/>
</dbReference>
<dbReference type="KEGG" id="cau:Caur_0901"/>
<dbReference type="PATRIC" id="fig|324602.8.peg.1032"/>
<dbReference type="eggNOG" id="COG0564">
    <property type="taxonomic scope" value="Bacteria"/>
</dbReference>
<dbReference type="HOGENOM" id="CLU_016902_4_4_0"/>
<dbReference type="InParanoid" id="Q45826"/>
<dbReference type="Proteomes" id="UP000002008">
    <property type="component" value="Chromosome"/>
</dbReference>
<dbReference type="GO" id="GO:0009982">
    <property type="term" value="F:pseudouridine synthase activity"/>
    <property type="evidence" value="ECO:0000318"/>
    <property type="project" value="GO_Central"/>
</dbReference>
<dbReference type="GO" id="GO:0003723">
    <property type="term" value="F:RNA binding"/>
    <property type="evidence" value="ECO:0007669"/>
    <property type="project" value="UniProtKB-KW"/>
</dbReference>
<dbReference type="GO" id="GO:0120159">
    <property type="term" value="F:rRNA pseudouridine synthase activity"/>
    <property type="evidence" value="ECO:0007669"/>
    <property type="project" value="UniProtKB-ARBA"/>
</dbReference>
<dbReference type="GO" id="GO:0000455">
    <property type="term" value="P:enzyme-directed rRNA pseudouridine synthesis"/>
    <property type="evidence" value="ECO:0000318"/>
    <property type="project" value="GO_Central"/>
</dbReference>
<dbReference type="CDD" id="cd02869">
    <property type="entry name" value="PseudoU_synth_RluA_like"/>
    <property type="match status" value="1"/>
</dbReference>
<dbReference type="CDD" id="cd00165">
    <property type="entry name" value="S4"/>
    <property type="match status" value="1"/>
</dbReference>
<dbReference type="FunFam" id="3.30.2350.10:FF:000006">
    <property type="entry name" value="Pseudouridine synthase"/>
    <property type="match status" value="1"/>
</dbReference>
<dbReference type="Gene3D" id="3.30.2350.10">
    <property type="entry name" value="Pseudouridine synthase"/>
    <property type="match status" value="1"/>
</dbReference>
<dbReference type="Gene3D" id="3.10.290.10">
    <property type="entry name" value="RNA-binding S4 domain"/>
    <property type="match status" value="1"/>
</dbReference>
<dbReference type="InterPro" id="IPR020103">
    <property type="entry name" value="PsdUridine_synth_cat_dom_sf"/>
</dbReference>
<dbReference type="InterPro" id="IPR006224">
    <property type="entry name" value="PsdUridine_synth_RluA-like_CS"/>
</dbReference>
<dbReference type="InterPro" id="IPR006225">
    <property type="entry name" value="PsdUridine_synth_RluC/D"/>
</dbReference>
<dbReference type="InterPro" id="IPR006145">
    <property type="entry name" value="PsdUridine_synth_RsuA/RluA"/>
</dbReference>
<dbReference type="InterPro" id="IPR050188">
    <property type="entry name" value="RluA_PseudoU_synthase"/>
</dbReference>
<dbReference type="InterPro" id="IPR002942">
    <property type="entry name" value="S4_RNA-bd"/>
</dbReference>
<dbReference type="InterPro" id="IPR036986">
    <property type="entry name" value="S4_RNA-bd_sf"/>
</dbReference>
<dbReference type="NCBIfam" id="TIGR00005">
    <property type="entry name" value="rluA_subfam"/>
    <property type="match status" value="1"/>
</dbReference>
<dbReference type="PANTHER" id="PTHR21600">
    <property type="entry name" value="MITOCHONDRIAL RNA PSEUDOURIDINE SYNTHASE"/>
    <property type="match status" value="1"/>
</dbReference>
<dbReference type="PANTHER" id="PTHR21600:SF44">
    <property type="entry name" value="RIBOSOMAL LARGE SUBUNIT PSEUDOURIDINE SYNTHASE D"/>
    <property type="match status" value="1"/>
</dbReference>
<dbReference type="Pfam" id="PF00849">
    <property type="entry name" value="PseudoU_synth_2"/>
    <property type="match status" value="1"/>
</dbReference>
<dbReference type="Pfam" id="PF01479">
    <property type="entry name" value="S4"/>
    <property type="match status" value="1"/>
</dbReference>
<dbReference type="SMART" id="SM00363">
    <property type="entry name" value="S4"/>
    <property type="match status" value="1"/>
</dbReference>
<dbReference type="SUPFAM" id="SSF55174">
    <property type="entry name" value="Alpha-L RNA-binding motif"/>
    <property type="match status" value="1"/>
</dbReference>
<dbReference type="SUPFAM" id="SSF55120">
    <property type="entry name" value="Pseudouridine synthase"/>
    <property type="match status" value="1"/>
</dbReference>
<dbReference type="PROSITE" id="PS01129">
    <property type="entry name" value="PSI_RLU"/>
    <property type="match status" value="1"/>
</dbReference>
<dbReference type="PROSITE" id="PS50889">
    <property type="entry name" value="S4"/>
    <property type="match status" value="1"/>
</dbReference>
<keyword id="KW-0413">Isomerase</keyword>
<keyword id="KW-1185">Reference proteome</keyword>
<keyword id="KW-0694">RNA-binding</keyword>
<name>Y901_CHLAA</name>